<proteinExistence type="inferred from homology"/>
<feature type="chain" id="PRO_1000059690" description="Chaperone protein DnaK">
    <location>
        <begin position="1"/>
        <end position="637"/>
    </location>
</feature>
<feature type="region of interest" description="Disordered" evidence="2">
    <location>
        <begin position="597"/>
        <end position="637"/>
    </location>
</feature>
<feature type="compositionally biased region" description="Gly residues" evidence="2">
    <location>
        <begin position="608"/>
        <end position="621"/>
    </location>
</feature>
<feature type="compositionally biased region" description="Acidic residues" evidence="2">
    <location>
        <begin position="627"/>
        <end position="637"/>
    </location>
</feature>
<feature type="modified residue" description="Phosphothreonine; by autocatalysis" evidence="1">
    <location>
        <position position="198"/>
    </location>
</feature>
<reference key="1">
    <citation type="journal article" date="2007" name="Proc. Natl. Acad. Sci. U.S.A.">
        <title>The genome of Syntrophus aciditrophicus: life at the thermodynamic limit of microbial growth.</title>
        <authorList>
            <person name="McInerney M.J."/>
            <person name="Rohlin L."/>
            <person name="Mouttaki H."/>
            <person name="Kim U."/>
            <person name="Krupp R.S."/>
            <person name="Rios-Hernandez L."/>
            <person name="Sieber J."/>
            <person name="Struchtemeyer C.G."/>
            <person name="Bhattacharyya A."/>
            <person name="Campbell J.W."/>
            <person name="Gunsalus R.P."/>
        </authorList>
    </citation>
    <scope>NUCLEOTIDE SEQUENCE [LARGE SCALE GENOMIC DNA]</scope>
    <source>
        <strain>SB</strain>
    </source>
</reference>
<sequence length="637" mass="68469">MGRIIGIDLGTTNSCVAVMEGGDPVVIANQEGNRTTPSIVAFTESGERLVGQVAKRQAVTNSENTVYAVKRLIGRKYNSKEVQYDKSISPFKISEAPNGDAQIEVRGRAYSPAEISSMVLVKMKQTAEDYLGEKITDAVITVPAYFNDSQRQATKDAGKIAGLNVLRIINEPTAAALAYGLDKKKDEKIAVFDLGGGTFDISILELGEGVFEVKSTNGDTHLGGEDFDQRIIDYLVSEFKKDQGIDIRSDKMALQRLKEAAEKAKMELSSSMETDINLPFITADASGPKHMNIKLTRARMEALVEELIDRLEGPCRTALKDAGLSPKDIDEVILVGGMTRMPRVQQKVKEIFDREPHKGVNPDEVVAVGAAIQGGVLGGEVKDVLLLDVTPLSLGIETLGGVMTKLIEKNTTIPTRKSQIFSTAADNQPAVSIHVLQGERSMAGDNRTLGRFDLVGIPPAPRGIPQIEVTFDIDANGIVHVSAKDLGTGKEQSIKITASSGLSETEIEKLVREAESHGEEDRKKKELVEARNSADAMAYGVEKNIKEFGDKVDAAEKARIEDAIAKVRKAVEGDDINAIRSAQDELTTASHKLAEAMYAKTSQAGAGPQPGAGPGTGGQGPGKKDEDVVDADFEEVK</sequence>
<gene>
    <name evidence="1" type="primary">dnaK</name>
    <name type="ordered locus">SYNAS_18590</name>
    <name type="ORF">SYN_01983</name>
</gene>
<protein>
    <recommendedName>
        <fullName evidence="1">Chaperone protein DnaK</fullName>
    </recommendedName>
    <alternativeName>
        <fullName evidence="1">HSP70</fullName>
    </alternativeName>
    <alternativeName>
        <fullName evidence="1">Heat shock 70 kDa protein</fullName>
    </alternativeName>
    <alternativeName>
        <fullName evidence="1">Heat shock protein 70</fullName>
    </alternativeName>
</protein>
<dbReference type="EMBL" id="CP000252">
    <property type="protein sequence ID" value="ABC77738.1"/>
    <property type="molecule type" value="Genomic_DNA"/>
</dbReference>
<dbReference type="RefSeq" id="WP_011417760.1">
    <property type="nucleotide sequence ID" value="NC_007759.1"/>
</dbReference>
<dbReference type="SMR" id="Q2LUH6"/>
<dbReference type="FunCoup" id="Q2LUH6">
    <property type="interactions" value="589"/>
</dbReference>
<dbReference type="STRING" id="56780.SYN_01983"/>
<dbReference type="KEGG" id="sat:SYN_01983"/>
<dbReference type="eggNOG" id="COG0443">
    <property type="taxonomic scope" value="Bacteria"/>
</dbReference>
<dbReference type="HOGENOM" id="CLU_005965_2_1_7"/>
<dbReference type="InParanoid" id="Q2LUH6"/>
<dbReference type="OrthoDB" id="9766019at2"/>
<dbReference type="Proteomes" id="UP000001933">
    <property type="component" value="Chromosome"/>
</dbReference>
<dbReference type="GO" id="GO:0005524">
    <property type="term" value="F:ATP binding"/>
    <property type="evidence" value="ECO:0007669"/>
    <property type="project" value="UniProtKB-UniRule"/>
</dbReference>
<dbReference type="GO" id="GO:0140662">
    <property type="term" value="F:ATP-dependent protein folding chaperone"/>
    <property type="evidence" value="ECO:0007669"/>
    <property type="project" value="InterPro"/>
</dbReference>
<dbReference type="GO" id="GO:0051082">
    <property type="term" value="F:unfolded protein binding"/>
    <property type="evidence" value="ECO:0007669"/>
    <property type="project" value="InterPro"/>
</dbReference>
<dbReference type="CDD" id="cd10234">
    <property type="entry name" value="ASKHA_NBD_HSP70_DnaK-like"/>
    <property type="match status" value="1"/>
</dbReference>
<dbReference type="FunFam" id="2.60.34.10:FF:000014">
    <property type="entry name" value="Chaperone protein DnaK HSP70"/>
    <property type="match status" value="1"/>
</dbReference>
<dbReference type="FunFam" id="3.30.420.40:FF:000020">
    <property type="entry name" value="Chaperone protein HscA homolog"/>
    <property type="match status" value="1"/>
</dbReference>
<dbReference type="FunFam" id="1.20.1270.10:FF:000001">
    <property type="entry name" value="Molecular chaperone DnaK"/>
    <property type="match status" value="1"/>
</dbReference>
<dbReference type="FunFam" id="3.30.420.40:FF:000004">
    <property type="entry name" value="Molecular chaperone DnaK"/>
    <property type="match status" value="1"/>
</dbReference>
<dbReference type="FunFam" id="3.90.640.10:FF:000003">
    <property type="entry name" value="Molecular chaperone DnaK"/>
    <property type="match status" value="1"/>
</dbReference>
<dbReference type="Gene3D" id="1.20.1270.10">
    <property type="match status" value="1"/>
</dbReference>
<dbReference type="Gene3D" id="3.30.420.40">
    <property type="match status" value="2"/>
</dbReference>
<dbReference type="Gene3D" id="3.90.640.10">
    <property type="entry name" value="Actin, Chain A, domain 4"/>
    <property type="match status" value="1"/>
</dbReference>
<dbReference type="Gene3D" id="2.60.34.10">
    <property type="entry name" value="Substrate Binding Domain Of DNAk, Chain A, domain 1"/>
    <property type="match status" value="1"/>
</dbReference>
<dbReference type="HAMAP" id="MF_00332">
    <property type="entry name" value="DnaK"/>
    <property type="match status" value="1"/>
</dbReference>
<dbReference type="InterPro" id="IPR043129">
    <property type="entry name" value="ATPase_NBD"/>
</dbReference>
<dbReference type="InterPro" id="IPR012725">
    <property type="entry name" value="Chaperone_DnaK"/>
</dbReference>
<dbReference type="InterPro" id="IPR018181">
    <property type="entry name" value="Heat_shock_70_CS"/>
</dbReference>
<dbReference type="InterPro" id="IPR029048">
    <property type="entry name" value="HSP70_C_sf"/>
</dbReference>
<dbReference type="InterPro" id="IPR029047">
    <property type="entry name" value="HSP70_peptide-bd_sf"/>
</dbReference>
<dbReference type="InterPro" id="IPR013126">
    <property type="entry name" value="Hsp_70_fam"/>
</dbReference>
<dbReference type="NCBIfam" id="NF001413">
    <property type="entry name" value="PRK00290.1"/>
    <property type="match status" value="1"/>
</dbReference>
<dbReference type="NCBIfam" id="NF003520">
    <property type="entry name" value="PRK05183.1"/>
    <property type="match status" value="1"/>
</dbReference>
<dbReference type="NCBIfam" id="TIGR02350">
    <property type="entry name" value="prok_dnaK"/>
    <property type="match status" value="1"/>
</dbReference>
<dbReference type="PANTHER" id="PTHR19375">
    <property type="entry name" value="HEAT SHOCK PROTEIN 70KDA"/>
    <property type="match status" value="1"/>
</dbReference>
<dbReference type="Pfam" id="PF00012">
    <property type="entry name" value="HSP70"/>
    <property type="match status" value="1"/>
</dbReference>
<dbReference type="PRINTS" id="PR00301">
    <property type="entry name" value="HEATSHOCK70"/>
</dbReference>
<dbReference type="SUPFAM" id="SSF53067">
    <property type="entry name" value="Actin-like ATPase domain"/>
    <property type="match status" value="2"/>
</dbReference>
<dbReference type="SUPFAM" id="SSF100934">
    <property type="entry name" value="Heat shock protein 70kD (HSP70), C-terminal subdomain"/>
    <property type="match status" value="1"/>
</dbReference>
<dbReference type="SUPFAM" id="SSF100920">
    <property type="entry name" value="Heat shock protein 70kD (HSP70), peptide-binding domain"/>
    <property type="match status" value="1"/>
</dbReference>
<dbReference type="PROSITE" id="PS00297">
    <property type="entry name" value="HSP70_1"/>
    <property type="match status" value="1"/>
</dbReference>
<dbReference type="PROSITE" id="PS00329">
    <property type="entry name" value="HSP70_2"/>
    <property type="match status" value="1"/>
</dbReference>
<dbReference type="PROSITE" id="PS01036">
    <property type="entry name" value="HSP70_3"/>
    <property type="match status" value="1"/>
</dbReference>
<keyword id="KW-0067">ATP-binding</keyword>
<keyword id="KW-0143">Chaperone</keyword>
<keyword id="KW-0547">Nucleotide-binding</keyword>
<keyword id="KW-0597">Phosphoprotein</keyword>
<keyword id="KW-1185">Reference proteome</keyword>
<keyword id="KW-0346">Stress response</keyword>
<accession>Q2LUH6</accession>
<evidence type="ECO:0000255" key="1">
    <source>
        <dbReference type="HAMAP-Rule" id="MF_00332"/>
    </source>
</evidence>
<evidence type="ECO:0000256" key="2">
    <source>
        <dbReference type="SAM" id="MobiDB-lite"/>
    </source>
</evidence>
<organism>
    <name type="scientific">Syntrophus aciditrophicus (strain SB)</name>
    <dbReference type="NCBI Taxonomy" id="56780"/>
    <lineage>
        <taxon>Bacteria</taxon>
        <taxon>Pseudomonadati</taxon>
        <taxon>Thermodesulfobacteriota</taxon>
        <taxon>Syntrophia</taxon>
        <taxon>Syntrophales</taxon>
        <taxon>Syntrophaceae</taxon>
        <taxon>Syntrophus</taxon>
    </lineage>
</organism>
<comment type="function">
    <text evidence="1">Acts as a chaperone.</text>
</comment>
<comment type="induction">
    <text evidence="1">By stress conditions e.g. heat shock.</text>
</comment>
<comment type="similarity">
    <text evidence="1">Belongs to the heat shock protein 70 family.</text>
</comment>
<name>DNAK_SYNAS</name>